<comment type="function">
    <text evidence="1">Catalyzes the hydrolysis of nucleoside triphosphates, with a preference for pyrimidine deoxynucleoside triphosphates (dUTP, dTTP and dCTP).</text>
</comment>
<comment type="catalytic activity">
    <reaction evidence="1">
        <text>a ribonucleoside 5'-triphosphate + H2O = a ribonucleoside 5'-phosphate + diphosphate + H(+)</text>
        <dbReference type="Rhea" id="RHEA:23996"/>
        <dbReference type="ChEBI" id="CHEBI:15377"/>
        <dbReference type="ChEBI" id="CHEBI:15378"/>
        <dbReference type="ChEBI" id="CHEBI:33019"/>
        <dbReference type="ChEBI" id="CHEBI:58043"/>
        <dbReference type="ChEBI" id="CHEBI:61557"/>
        <dbReference type="EC" id="3.6.1.9"/>
    </reaction>
</comment>
<comment type="catalytic activity">
    <reaction evidence="1">
        <text>a 2'-deoxyribonucleoside 5'-triphosphate + H2O = a 2'-deoxyribonucleoside 5'-phosphate + diphosphate + H(+)</text>
        <dbReference type="Rhea" id="RHEA:44644"/>
        <dbReference type="ChEBI" id="CHEBI:15377"/>
        <dbReference type="ChEBI" id="CHEBI:15378"/>
        <dbReference type="ChEBI" id="CHEBI:33019"/>
        <dbReference type="ChEBI" id="CHEBI:61560"/>
        <dbReference type="ChEBI" id="CHEBI:65317"/>
        <dbReference type="EC" id="3.6.1.9"/>
    </reaction>
</comment>
<comment type="catalytic activity">
    <reaction evidence="1">
        <text>dUTP + H2O = dUMP + diphosphate + H(+)</text>
        <dbReference type="Rhea" id="RHEA:10248"/>
        <dbReference type="ChEBI" id="CHEBI:15377"/>
        <dbReference type="ChEBI" id="CHEBI:15378"/>
        <dbReference type="ChEBI" id="CHEBI:33019"/>
        <dbReference type="ChEBI" id="CHEBI:61555"/>
        <dbReference type="ChEBI" id="CHEBI:246422"/>
        <dbReference type="EC" id="3.6.1.9"/>
    </reaction>
</comment>
<comment type="catalytic activity">
    <reaction evidence="1">
        <text>dUTP + H2O = dUMP + diphosphate + H(+)</text>
        <dbReference type="Rhea" id="RHEA:10248"/>
        <dbReference type="ChEBI" id="CHEBI:15377"/>
        <dbReference type="ChEBI" id="CHEBI:15378"/>
        <dbReference type="ChEBI" id="CHEBI:33019"/>
        <dbReference type="ChEBI" id="CHEBI:61555"/>
        <dbReference type="ChEBI" id="CHEBI:246422"/>
        <dbReference type="EC" id="3.6.1.23"/>
    </reaction>
</comment>
<comment type="catalytic activity">
    <reaction evidence="1">
        <text>dTTP + H2O = dTMP + diphosphate + H(+)</text>
        <dbReference type="Rhea" id="RHEA:28534"/>
        <dbReference type="ChEBI" id="CHEBI:15377"/>
        <dbReference type="ChEBI" id="CHEBI:15378"/>
        <dbReference type="ChEBI" id="CHEBI:33019"/>
        <dbReference type="ChEBI" id="CHEBI:37568"/>
        <dbReference type="ChEBI" id="CHEBI:63528"/>
        <dbReference type="EC" id="3.6.1.9"/>
    </reaction>
</comment>
<comment type="catalytic activity">
    <reaction evidence="1">
        <text>dCTP + H2O = dCMP + diphosphate + H(+)</text>
        <dbReference type="Rhea" id="RHEA:22636"/>
        <dbReference type="ChEBI" id="CHEBI:15377"/>
        <dbReference type="ChEBI" id="CHEBI:15378"/>
        <dbReference type="ChEBI" id="CHEBI:33019"/>
        <dbReference type="ChEBI" id="CHEBI:57566"/>
        <dbReference type="ChEBI" id="CHEBI:61481"/>
        <dbReference type="EC" id="3.6.1.9"/>
    </reaction>
</comment>
<comment type="catalytic activity">
    <reaction evidence="1">
        <text>dCTP + H2O = dCMP + diphosphate + H(+)</text>
        <dbReference type="Rhea" id="RHEA:22636"/>
        <dbReference type="ChEBI" id="CHEBI:15377"/>
        <dbReference type="ChEBI" id="CHEBI:15378"/>
        <dbReference type="ChEBI" id="CHEBI:33019"/>
        <dbReference type="ChEBI" id="CHEBI:57566"/>
        <dbReference type="ChEBI" id="CHEBI:61481"/>
        <dbReference type="EC" id="3.6.1.12"/>
    </reaction>
</comment>
<comment type="cofactor">
    <cofactor evidence="1">
        <name>Mg(2+)</name>
        <dbReference type="ChEBI" id="CHEBI:18420"/>
    </cofactor>
</comment>
<comment type="subunit">
    <text evidence="1">Monomer.</text>
</comment>
<comment type="similarity">
    <text evidence="1">Belongs to the Nudix hydrolase family. NudI subfamily.</text>
</comment>
<feature type="chain" id="PRO_1000188483" description="Nucleoside triphosphatase NudI">
    <location>
        <begin position="1"/>
        <end position="141"/>
    </location>
</feature>
<feature type="domain" description="Nudix hydrolase" evidence="1">
    <location>
        <begin position="1"/>
        <end position="141"/>
    </location>
</feature>
<feature type="short sequence motif" description="Nudix box">
    <location>
        <begin position="38"/>
        <end position="59"/>
    </location>
</feature>
<gene>
    <name evidence="1" type="primary">nudI</name>
    <name type="ordered locus">ECSE_2510</name>
</gene>
<proteinExistence type="inferred from homology"/>
<reference key="1">
    <citation type="journal article" date="2008" name="DNA Res.">
        <title>Complete genome sequence and comparative analysis of the wild-type commensal Escherichia coli strain SE11 isolated from a healthy adult.</title>
        <authorList>
            <person name="Oshima K."/>
            <person name="Toh H."/>
            <person name="Ogura Y."/>
            <person name="Sasamoto H."/>
            <person name="Morita H."/>
            <person name="Park S.-H."/>
            <person name="Ooka T."/>
            <person name="Iyoda S."/>
            <person name="Taylor T.D."/>
            <person name="Hayashi T."/>
            <person name="Itoh K."/>
            <person name="Hattori M."/>
        </authorList>
    </citation>
    <scope>NUCLEOTIDE SEQUENCE [LARGE SCALE GENOMIC DNA]</scope>
    <source>
        <strain>SE11</strain>
    </source>
</reference>
<evidence type="ECO:0000255" key="1">
    <source>
        <dbReference type="HAMAP-Rule" id="MF_01846"/>
    </source>
</evidence>
<keyword id="KW-0378">Hydrolase</keyword>
<keyword id="KW-0460">Magnesium</keyword>
<name>NUDI_ECOSE</name>
<dbReference type="EC" id="3.6.1.9" evidence="1"/>
<dbReference type="EC" id="3.6.1.12" evidence="1"/>
<dbReference type="EC" id="3.6.1.-" evidence="1"/>
<dbReference type="EC" id="3.6.1.23" evidence="1"/>
<dbReference type="EMBL" id="AP009240">
    <property type="protein sequence ID" value="BAG78034.1"/>
    <property type="molecule type" value="Genomic_DNA"/>
</dbReference>
<dbReference type="RefSeq" id="WP_001249889.1">
    <property type="nucleotide sequence ID" value="NC_011415.1"/>
</dbReference>
<dbReference type="SMR" id="B6I7J4"/>
<dbReference type="GeneID" id="93774923"/>
<dbReference type="KEGG" id="ecy:ECSE_2510"/>
<dbReference type="HOGENOM" id="CLU_037162_31_0_6"/>
<dbReference type="Proteomes" id="UP000008199">
    <property type="component" value="Chromosome"/>
</dbReference>
<dbReference type="GO" id="GO:0047840">
    <property type="term" value="F:dCTP diphosphatase activity"/>
    <property type="evidence" value="ECO:0007669"/>
    <property type="project" value="UniProtKB-EC"/>
</dbReference>
<dbReference type="GO" id="GO:0036218">
    <property type="term" value="F:dTTP diphosphatase activity"/>
    <property type="evidence" value="ECO:0007669"/>
    <property type="project" value="RHEA"/>
</dbReference>
<dbReference type="GO" id="GO:0004170">
    <property type="term" value="F:dUTP diphosphatase activity"/>
    <property type="evidence" value="ECO:0007669"/>
    <property type="project" value="UniProtKB-EC"/>
</dbReference>
<dbReference type="GO" id="GO:0000287">
    <property type="term" value="F:magnesium ion binding"/>
    <property type="evidence" value="ECO:0007669"/>
    <property type="project" value="UniProtKB-UniRule"/>
</dbReference>
<dbReference type="FunFam" id="3.90.79.10:FF:000039">
    <property type="entry name" value="Nucleoside triphosphatase NudI"/>
    <property type="match status" value="1"/>
</dbReference>
<dbReference type="Gene3D" id="3.90.79.10">
    <property type="entry name" value="Nucleoside Triphosphate Pyrophosphohydrolase"/>
    <property type="match status" value="1"/>
</dbReference>
<dbReference type="HAMAP" id="MF_01846">
    <property type="entry name" value="Nudix_NudI"/>
    <property type="match status" value="1"/>
</dbReference>
<dbReference type="InterPro" id="IPR023781">
    <property type="entry name" value="Nucleoside_triphosphatase_NudI"/>
</dbReference>
<dbReference type="InterPro" id="IPR020476">
    <property type="entry name" value="Nudix_hydrolase"/>
</dbReference>
<dbReference type="InterPro" id="IPR015797">
    <property type="entry name" value="NUDIX_hydrolase-like_dom_sf"/>
</dbReference>
<dbReference type="InterPro" id="IPR020084">
    <property type="entry name" value="NUDIX_hydrolase_CS"/>
</dbReference>
<dbReference type="InterPro" id="IPR000086">
    <property type="entry name" value="NUDIX_hydrolase_dom"/>
</dbReference>
<dbReference type="NCBIfam" id="NF012016">
    <property type="entry name" value="PRK15472.1"/>
    <property type="match status" value="1"/>
</dbReference>
<dbReference type="PANTHER" id="PTHR43046">
    <property type="entry name" value="GDP-MANNOSE MANNOSYL HYDROLASE"/>
    <property type="match status" value="1"/>
</dbReference>
<dbReference type="PANTHER" id="PTHR43046:SF14">
    <property type="entry name" value="MUTT_NUDIX FAMILY PROTEIN"/>
    <property type="match status" value="1"/>
</dbReference>
<dbReference type="Pfam" id="PF00293">
    <property type="entry name" value="NUDIX"/>
    <property type="match status" value="1"/>
</dbReference>
<dbReference type="PRINTS" id="PR00502">
    <property type="entry name" value="NUDIXFAMILY"/>
</dbReference>
<dbReference type="SUPFAM" id="SSF55811">
    <property type="entry name" value="Nudix"/>
    <property type="match status" value="1"/>
</dbReference>
<dbReference type="PROSITE" id="PS51462">
    <property type="entry name" value="NUDIX"/>
    <property type="match status" value="1"/>
</dbReference>
<dbReference type="PROSITE" id="PS00893">
    <property type="entry name" value="NUDIX_BOX"/>
    <property type="match status" value="1"/>
</dbReference>
<accession>B6I7J4</accession>
<sequence>MRQRTIVCPLIQNDGAYLLCKMADDRGVFPGQWALSGGGVESGERIEEALRREIREELGEQLLLTEITPWTFSDDIRTKTYADGRKEEIYMIYLIFDCVSANREVKINEEFQDYAWVKPEDLVHYDLNVATRKTLRLKGLL</sequence>
<organism>
    <name type="scientific">Escherichia coli (strain SE11)</name>
    <dbReference type="NCBI Taxonomy" id="409438"/>
    <lineage>
        <taxon>Bacteria</taxon>
        <taxon>Pseudomonadati</taxon>
        <taxon>Pseudomonadota</taxon>
        <taxon>Gammaproteobacteria</taxon>
        <taxon>Enterobacterales</taxon>
        <taxon>Enterobacteriaceae</taxon>
        <taxon>Escherichia</taxon>
    </lineage>
</organism>
<protein>
    <recommendedName>
        <fullName evidence="1">Nucleoside triphosphatase NudI</fullName>
        <ecNumber evidence="1">3.6.1.9</ecNumber>
    </recommendedName>
    <alternativeName>
        <fullName evidence="1">Nucleotide diphosphatase NudI</fullName>
    </alternativeName>
    <alternativeName>
        <fullName evidence="1">Pyrimidine deoxynucleoside triphosphate diphosphatase</fullName>
    </alternativeName>
    <alternativeName>
        <fullName evidence="1">dCTP diphosphatase</fullName>
        <ecNumber evidence="1">3.6.1.12</ecNumber>
    </alternativeName>
    <alternativeName>
        <fullName evidence="1">dTTP diphosphatase</fullName>
        <ecNumber evidence="1">3.6.1.-</ecNumber>
    </alternativeName>
    <alternativeName>
        <fullName evidence="1">dUTP diphosphatase</fullName>
        <ecNumber evidence="1">3.6.1.23</ecNumber>
    </alternativeName>
</protein>